<accession>Q02Z11</accession>
<protein>
    <recommendedName>
        <fullName evidence="1">UDP-N-acetylenolpyruvoylglucosamine reductase</fullName>
        <ecNumber evidence="1">1.3.1.98</ecNumber>
    </recommendedName>
    <alternativeName>
        <fullName evidence="1">UDP-N-acetylmuramate dehydrogenase</fullName>
    </alternativeName>
</protein>
<sequence>MIKETDLENIPDLLIKFNEPLSNYTYTKVGGPADILAFPATIEALTELSAKAKATDTPVTVLGNASNLIVRDGGIRGVVILLEKLDSVKVAGYTIEAQAGAKLKEVTQVAQANSLTGFEFACGIPGSIGGAVFMNAGAYGGEIYQVLVSCKVMDAAGNVSVLSASEMQFGYRHSVIRDKNLIVLSAKFELQAGDPTQIQNEMDRLNFLRESKQPLEYPSCGSVFKRPVGHFAGQLIQEAKLQGQRIGGVEVSKKHAGFMVNVADGNATDYEKLIALVIEKVKENSGVTLEPEVRIIGEK</sequence>
<name>MURB_LACLS</name>
<dbReference type="EC" id="1.3.1.98" evidence="1"/>
<dbReference type="EMBL" id="CP000425">
    <property type="protein sequence ID" value="ABJ72811.1"/>
    <property type="molecule type" value="Genomic_DNA"/>
</dbReference>
<dbReference type="RefSeq" id="WP_011676282.1">
    <property type="nucleotide sequence ID" value="NC_008527.1"/>
</dbReference>
<dbReference type="SMR" id="Q02Z11"/>
<dbReference type="KEGG" id="llc:LACR_1283"/>
<dbReference type="HOGENOM" id="CLU_035304_1_1_9"/>
<dbReference type="UniPathway" id="UPA00219"/>
<dbReference type="Proteomes" id="UP000000240">
    <property type="component" value="Chromosome"/>
</dbReference>
<dbReference type="GO" id="GO:0005829">
    <property type="term" value="C:cytosol"/>
    <property type="evidence" value="ECO:0007669"/>
    <property type="project" value="TreeGrafter"/>
</dbReference>
<dbReference type="GO" id="GO:0071949">
    <property type="term" value="F:FAD binding"/>
    <property type="evidence" value="ECO:0007669"/>
    <property type="project" value="InterPro"/>
</dbReference>
<dbReference type="GO" id="GO:0008762">
    <property type="term" value="F:UDP-N-acetylmuramate dehydrogenase activity"/>
    <property type="evidence" value="ECO:0007669"/>
    <property type="project" value="UniProtKB-UniRule"/>
</dbReference>
<dbReference type="GO" id="GO:0051301">
    <property type="term" value="P:cell division"/>
    <property type="evidence" value="ECO:0007669"/>
    <property type="project" value="UniProtKB-KW"/>
</dbReference>
<dbReference type="GO" id="GO:0071555">
    <property type="term" value="P:cell wall organization"/>
    <property type="evidence" value="ECO:0007669"/>
    <property type="project" value="UniProtKB-KW"/>
</dbReference>
<dbReference type="GO" id="GO:0009252">
    <property type="term" value="P:peptidoglycan biosynthetic process"/>
    <property type="evidence" value="ECO:0007669"/>
    <property type="project" value="UniProtKB-UniRule"/>
</dbReference>
<dbReference type="GO" id="GO:0008360">
    <property type="term" value="P:regulation of cell shape"/>
    <property type="evidence" value="ECO:0007669"/>
    <property type="project" value="UniProtKB-KW"/>
</dbReference>
<dbReference type="Gene3D" id="3.30.465.10">
    <property type="match status" value="1"/>
</dbReference>
<dbReference type="Gene3D" id="3.90.78.10">
    <property type="entry name" value="UDP-N-acetylenolpyruvoylglucosamine reductase, C-terminal domain"/>
    <property type="match status" value="1"/>
</dbReference>
<dbReference type="Gene3D" id="3.30.43.10">
    <property type="entry name" value="Uridine Diphospho-n-acetylenolpyruvylglucosamine Reductase, domain 2"/>
    <property type="match status" value="1"/>
</dbReference>
<dbReference type="HAMAP" id="MF_00037">
    <property type="entry name" value="MurB"/>
    <property type="match status" value="1"/>
</dbReference>
<dbReference type="InterPro" id="IPR016166">
    <property type="entry name" value="FAD-bd_PCMH"/>
</dbReference>
<dbReference type="InterPro" id="IPR036318">
    <property type="entry name" value="FAD-bd_PCMH-like_sf"/>
</dbReference>
<dbReference type="InterPro" id="IPR016167">
    <property type="entry name" value="FAD-bd_PCMH_sub1"/>
</dbReference>
<dbReference type="InterPro" id="IPR016169">
    <property type="entry name" value="FAD-bd_PCMH_sub2"/>
</dbReference>
<dbReference type="InterPro" id="IPR003170">
    <property type="entry name" value="MurB"/>
</dbReference>
<dbReference type="InterPro" id="IPR011601">
    <property type="entry name" value="MurB_C"/>
</dbReference>
<dbReference type="InterPro" id="IPR036635">
    <property type="entry name" value="MurB_C_sf"/>
</dbReference>
<dbReference type="InterPro" id="IPR006094">
    <property type="entry name" value="Oxid_FAD_bind_N"/>
</dbReference>
<dbReference type="NCBIfam" id="TIGR00179">
    <property type="entry name" value="murB"/>
    <property type="match status" value="1"/>
</dbReference>
<dbReference type="NCBIfam" id="NF010480">
    <property type="entry name" value="PRK13905.1"/>
    <property type="match status" value="1"/>
</dbReference>
<dbReference type="PANTHER" id="PTHR21071">
    <property type="entry name" value="UDP-N-ACETYLENOLPYRUVOYLGLUCOSAMINE REDUCTASE"/>
    <property type="match status" value="1"/>
</dbReference>
<dbReference type="PANTHER" id="PTHR21071:SF4">
    <property type="entry name" value="UDP-N-ACETYLENOLPYRUVOYLGLUCOSAMINE REDUCTASE"/>
    <property type="match status" value="1"/>
</dbReference>
<dbReference type="Pfam" id="PF01565">
    <property type="entry name" value="FAD_binding_4"/>
    <property type="match status" value="1"/>
</dbReference>
<dbReference type="Pfam" id="PF02873">
    <property type="entry name" value="MurB_C"/>
    <property type="match status" value="1"/>
</dbReference>
<dbReference type="SUPFAM" id="SSF56176">
    <property type="entry name" value="FAD-binding/transporter-associated domain-like"/>
    <property type="match status" value="1"/>
</dbReference>
<dbReference type="SUPFAM" id="SSF56194">
    <property type="entry name" value="Uridine diphospho-N-Acetylenolpyruvylglucosamine reductase, MurB, C-terminal domain"/>
    <property type="match status" value="1"/>
</dbReference>
<dbReference type="PROSITE" id="PS51387">
    <property type="entry name" value="FAD_PCMH"/>
    <property type="match status" value="1"/>
</dbReference>
<feature type="chain" id="PRO_0000332467" description="UDP-N-acetylenolpyruvoylglucosamine reductase">
    <location>
        <begin position="1"/>
        <end position="299"/>
    </location>
</feature>
<feature type="domain" description="FAD-binding PCMH-type" evidence="1">
    <location>
        <begin position="28"/>
        <end position="193"/>
    </location>
</feature>
<feature type="active site" evidence="1">
    <location>
        <position position="172"/>
    </location>
</feature>
<feature type="active site" description="Proton donor" evidence="1">
    <location>
        <position position="222"/>
    </location>
</feature>
<feature type="active site" evidence="1">
    <location>
        <position position="292"/>
    </location>
</feature>
<organism>
    <name type="scientific">Lactococcus lactis subsp. cremoris (strain SK11)</name>
    <dbReference type="NCBI Taxonomy" id="272622"/>
    <lineage>
        <taxon>Bacteria</taxon>
        <taxon>Bacillati</taxon>
        <taxon>Bacillota</taxon>
        <taxon>Bacilli</taxon>
        <taxon>Lactobacillales</taxon>
        <taxon>Streptococcaceae</taxon>
        <taxon>Lactococcus</taxon>
        <taxon>Lactococcus cremoris subsp. cremoris</taxon>
    </lineage>
</organism>
<gene>
    <name evidence="1" type="primary">murB</name>
    <name type="ordered locus">LACR_1283</name>
</gene>
<keyword id="KW-0131">Cell cycle</keyword>
<keyword id="KW-0132">Cell division</keyword>
<keyword id="KW-0133">Cell shape</keyword>
<keyword id="KW-0961">Cell wall biogenesis/degradation</keyword>
<keyword id="KW-0963">Cytoplasm</keyword>
<keyword id="KW-0274">FAD</keyword>
<keyword id="KW-0285">Flavoprotein</keyword>
<keyword id="KW-0521">NADP</keyword>
<keyword id="KW-0560">Oxidoreductase</keyword>
<keyword id="KW-0573">Peptidoglycan synthesis</keyword>
<evidence type="ECO:0000255" key="1">
    <source>
        <dbReference type="HAMAP-Rule" id="MF_00037"/>
    </source>
</evidence>
<comment type="function">
    <text evidence="1">Cell wall formation.</text>
</comment>
<comment type="catalytic activity">
    <reaction evidence="1">
        <text>UDP-N-acetyl-alpha-D-muramate + NADP(+) = UDP-N-acetyl-3-O-(1-carboxyvinyl)-alpha-D-glucosamine + NADPH + H(+)</text>
        <dbReference type="Rhea" id="RHEA:12248"/>
        <dbReference type="ChEBI" id="CHEBI:15378"/>
        <dbReference type="ChEBI" id="CHEBI:57783"/>
        <dbReference type="ChEBI" id="CHEBI:58349"/>
        <dbReference type="ChEBI" id="CHEBI:68483"/>
        <dbReference type="ChEBI" id="CHEBI:70757"/>
        <dbReference type="EC" id="1.3.1.98"/>
    </reaction>
</comment>
<comment type="cofactor">
    <cofactor evidence="1">
        <name>FAD</name>
        <dbReference type="ChEBI" id="CHEBI:57692"/>
    </cofactor>
</comment>
<comment type="pathway">
    <text evidence="1">Cell wall biogenesis; peptidoglycan biosynthesis.</text>
</comment>
<comment type="subcellular location">
    <subcellularLocation>
        <location evidence="1">Cytoplasm</location>
    </subcellularLocation>
</comment>
<comment type="similarity">
    <text evidence="1">Belongs to the MurB family.</text>
</comment>
<reference key="1">
    <citation type="journal article" date="2006" name="Proc. Natl. Acad. Sci. U.S.A.">
        <title>Comparative genomics of the lactic acid bacteria.</title>
        <authorList>
            <person name="Makarova K.S."/>
            <person name="Slesarev A."/>
            <person name="Wolf Y.I."/>
            <person name="Sorokin A."/>
            <person name="Mirkin B."/>
            <person name="Koonin E.V."/>
            <person name="Pavlov A."/>
            <person name="Pavlova N."/>
            <person name="Karamychev V."/>
            <person name="Polouchine N."/>
            <person name="Shakhova V."/>
            <person name="Grigoriev I."/>
            <person name="Lou Y."/>
            <person name="Rohksar D."/>
            <person name="Lucas S."/>
            <person name="Huang K."/>
            <person name="Goodstein D.M."/>
            <person name="Hawkins T."/>
            <person name="Plengvidhya V."/>
            <person name="Welker D."/>
            <person name="Hughes J."/>
            <person name="Goh Y."/>
            <person name="Benson A."/>
            <person name="Baldwin K."/>
            <person name="Lee J.-H."/>
            <person name="Diaz-Muniz I."/>
            <person name="Dosti B."/>
            <person name="Smeianov V."/>
            <person name="Wechter W."/>
            <person name="Barabote R."/>
            <person name="Lorca G."/>
            <person name="Altermann E."/>
            <person name="Barrangou R."/>
            <person name="Ganesan B."/>
            <person name="Xie Y."/>
            <person name="Rawsthorne H."/>
            <person name="Tamir D."/>
            <person name="Parker C."/>
            <person name="Breidt F."/>
            <person name="Broadbent J.R."/>
            <person name="Hutkins R."/>
            <person name="O'Sullivan D."/>
            <person name="Steele J."/>
            <person name="Unlu G."/>
            <person name="Saier M.H. Jr."/>
            <person name="Klaenhammer T."/>
            <person name="Richardson P."/>
            <person name="Kozyavkin S."/>
            <person name="Weimer B.C."/>
            <person name="Mills D.A."/>
        </authorList>
    </citation>
    <scope>NUCLEOTIDE SEQUENCE [LARGE SCALE GENOMIC DNA]</scope>
    <source>
        <strain>SK11</strain>
    </source>
</reference>
<proteinExistence type="inferred from homology"/>